<proteinExistence type="evidence at protein level"/>
<organism>
    <name type="scientific">Lithobates septentrionalis</name>
    <name type="common">Mink frog</name>
    <name type="synonym">Rana septentrionalis</name>
    <dbReference type="NCBI Taxonomy" id="190274"/>
    <lineage>
        <taxon>Eukaryota</taxon>
        <taxon>Metazoa</taxon>
        <taxon>Chordata</taxon>
        <taxon>Craniata</taxon>
        <taxon>Vertebrata</taxon>
        <taxon>Euteleostomi</taxon>
        <taxon>Amphibia</taxon>
        <taxon>Batrachia</taxon>
        <taxon>Anura</taxon>
        <taxon>Neobatrachia</taxon>
        <taxon>Ranoidea</taxon>
        <taxon>Ranidae</taxon>
        <taxon>Lithobates</taxon>
    </lineage>
</organism>
<reference key="1">
    <citation type="journal article" date="2004" name="Comp. Biochem. Physiol.">
        <title>Purification and characterization of antimicrobial peptides from the skin secretions of the mink frog (Rana septentrionalis).</title>
        <authorList>
            <person name="Bevier C.R."/>
            <person name="Sonnevend A."/>
            <person name="Kolodziejek J."/>
            <person name="Nowotny N."/>
            <person name="Nielsen P.F."/>
            <person name="Conlon J.M."/>
        </authorList>
    </citation>
    <scope>PROTEIN SEQUENCE</scope>
    <scope>SUBCELLULAR LOCATION</scope>
    <scope>MASS SPECTROMETRY</scope>
    <scope>DEVELOPMENTAL STAGE</scope>
    <scope>DISULFIDE BOND</scope>
    <source>
        <tissue>Skin secretion</tissue>
    </source>
</reference>
<accession>P0DQK1</accession>
<comment type="function">
    <text evidence="1">Antimicrobial peptide with activity against Gram-negative and Gram-positive bacteria and fungi. Also shows hemolytic activity.</text>
</comment>
<comment type="subcellular location">
    <subcellularLocation>
        <location evidence="2">Secreted</location>
    </subcellularLocation>
</comment>
<comment type="tissue specificity">
    <text evidence="5">Expressed by the skin glands.</text>
</comment>
<comment type="developmental stage">
    <text evidence="5">Is equally expressed in juvenile and adult (male and female) frogs.</text>
</comment>
<comment type="mass spectrometry" mass="2581.1" method="MALDI" evidence="2"/>
<comment type="similarity">
    <text evidence="4">Belongs to the frog skin active peptide (FSAP) family. Brevinin subfamily.</text>
</comment>
<comment type="online information" name="The antimicrobial peptide database">
    <link uri="https://wangapd3.com/database/query_output.php?ID=01441"/>
</comment>
<name>BR1C_LITST</name>
<protein>
    <recommendedName>
        <fullName evidence="3">Brevinin-1SPc</fullName>
    </recommendedName>
</protein>
<evidence type="ECO:0000250" key="1">
    <source>
        <dbReference type="UniProtKB" id="P0DQJ9"/>
    </source>
</evidence>
<evidence type="ECO:0000269" key="2">
    <source>
    </source>
</evidence>
<evidence type="ECO:0000303" key="3">
    <source>
    </source>
</evidence>
<evidence type="ECO:0000305" key="4"/>
<evidence type="ECO:0000305" key="5">
    <source>
    </source>
</evidence>
<keyword id="KW-0878">Amphibian defense peptide</keyword>
<keyword id="KW-0044">Antibiotic</keyword>
<keyword id="KW-0929">Antimicrobial</keyword>
<keyword id="KW-0204">Cytolysis</keyword>
<keyword id="KW-0903">Direct protein sequencing</keyword>
<keyword id="KW-1015">Disulfide bond</keyword>
<keyword id="KW-0295">Fungicide</keyword>
<keyword id="KW-0354">Hemolysis</keyword>
<keyword id="KW-0964">Secreted</keyword>
<sequence length="24" mass="2585">FLPIIASVAAKLIPSIVCRITKKC</sequence>
<dbReference type="GO" id="GO:0005576">
    <property type="term" value="C:extracellular region"/>
    <property type="evidence" value="ECO:0007669"/>
    <property type="project" value="UniProtKB-SubCell"/>
</dbReference>
<dbReference type="GO" id="GO:0042742">
    <property type="term" value="P:defense response to bacterium"/>
    <property type="evidence" value="ECO:0007669"/>
    <property type="project" value="UniProtKB-KW"/>
</dbReference>
<dbReference type="GO" id="GO:0050832">
    <property type="term" value="P:defense response to fungus"/>
    <property type="evidence" value="ECO:0007669"/>
    <property type="project" value="UniProtKB-KW"/>
</dbReference>
<dbReference type="GO" id="GO:0031640">
    <property type="term" value="P:killing of cells of another organism"/>
    <property type="evidence" value="ECO:0007669"/>
    <property type="project" value="UniProtKB-KW"/>
</dbReference>
<dbReference type="InterPro" id="IPR012520">
    <property type="entry name" value="Antimicrobial_frog_1"/>
</dbReference>
<dbReference type="Pfam" id="PF08018">
    <property type="entry name" value="Antimicrobial_1"/>
    <property type="match status" value="1"/>
</dbReference>
<feature type="peptide" id="PRO_0000449478" description="Brevinin-1SPc" evidence="2">
    <location>
        <begin position="1"/>
        <end position="24"/>
    </location>
</feature>
<feature type="disulfide bond" evidence="2">
    <location>
        <begin position="18"/>
        <end position="24"/>
    </location>
</feature>